<gene>
    <name type="primary">MT-ND4L</name>
    <name type="synonym">MTND4L</name>
    <name type="synonym">NADH4L</name>
    <name type="synonym">ND4L</name>
</gene>
<proteinExistence type="inferred from homology"/>
<keyword id="KW-0249">Electron transport</keyword>
<keyword id="KW-0472">Membrane</keyword>
<keyword id="KW-0496">Mitochondrion</keyword>
<keyword id="KW-0999">Mitochondrion inner membrane</keyword>
<keyword id="KW-0520">NAD</keyword>
<keyword id="KW-0679">Respiratory chain</keyword>
<keyword id="KW-1278">Translocase</keyword>
<keyword id="KW-0812">Transmembrane</keyword>
<keyword id="KW-1133">Transmembrane helix</keyword>
<keyword id="KW-0813">Transport</keyword>
<keyword id="KW-0830">Ubiquinone</keyword>
<protein>
    <recommendedName>
        <fullName>NADH-ubiquinone oxidoreductase chain 4L</fullName>
        <ecNumber>7.1.1.2</ecNumber>
    </recommendedName>
    <alternativeName>
        <fullName>NADH dehydrogenase subunit 4L</fullName>
    </alternativeName>
</protein>
<organism>
    <name type="scientific">Otaria byronia</name>
    <name type="common">South American sea lion</name>
    <dbReference type="NCBI Taxonomy" id="161932"/>
    <lineage>
        <taxon>Eukaryota</taxon>
        <taxon>Metazoa</taxon>
        <taxon>Chordata</taxon>
        <taxon>Craniata</taxon>
        <taxon>Vertebrata</taxon>
        <taxon>Euteleostomi</taxon>
        <taxon>Mammalia</taxon>
        <taxon>Eutheria</taxon>
        <taxon>Laurasiatheria</taxon>
        <taxon>Carnivora</taxon>
        <taxon>Caniformia</taxon>
        <taxon>Pinnipedia</taxon>
        <taxon>Otariidae</taxon>
        <taxon>Otaria</taxon>
    </lineage>
</organism>
<comment type="function">
    <text evidence="1">Core subunit of the mitochondrial membrane respiratory chain NADH dehydrogenase (Complex I) which catalyzes electron transfer from NADH through the respiratory chain, using ubiquinone as an electron acceptor. Part of the enzyme membrane arm which is embedded in the lipid bilayer and involved in proton translocation.</text>
</comment>
<comment type="catalytic activity">
    <reaction evidence="1">
        <text>a ubiquinone + NADH + 5 H(+)(in) = a ubiquinol + NAD(+) + 4 H(+)(out)</text>
        <dbReference type="Rhea" id="RHEA:29091"/>
        <dbReference type="Rhea" id="RHEA-COMP:9565"/>
        <dbReference type="Rhea" id="RHEA-COMP:9566"/>
        <dbReference type="ChEBI" id="CHEBI:15378"/>
        <dbReference type="ChEBI" id="CHEBI:16389"/>
        <dbReference type="ChEBI" id="CHEBI:17976"/>
        <dbReference type="ChEBI" id="CHEBI:57540"/>
        <dbReference type="ChEBI" id="CHEBI:57945"/>
        <dbReference type="EC" id="7.1.1.2"/>
    </reaction>
    <physiologicalReaction direction="left-to-right" evidence="1">
        <dbReference type="Rhea" id="RHEA:29092"/>
    </physiologicalReaction>
</comment>
<comment type="subunit">
    <text evidence="2">Core subunit of respiratory chain NADH dehydrogenase (Complex I) which is composed of 45 different subunits.</text>
</comment>
<comment type="subcellular location">
    <subcellularLocation>
        <location evidence="2">Mitochondrion inner membrane</location>
        <topology evidence="3">Multi-pass membrane protein</topology>
    </subcellularLocation>
</comment>
<comment type="similarity">
    <text evidence="4">Belongs to the complex I subunit 4L family.</text>
</comment>
<accession>Q679A3</accession>
<sequence length="98" mass="10872">MSMVYFNIFMAFTVSLVGLLMYRSHLMSSLLCLEGMMLSLFVLMSMTILNNHFTLASMAPIILLVFAACEAALGLSLLVMVSNTYGTDYVQNLNLLQC</sequence>
<evidence type="ECO:0000250" key="1">
    <source>
        <dbReference type="UniProtKB" id="P03901"/>
    </source>
</evidence>
<evidence type="ECO:0000250" key="2">
    <source>
        <dbReference type="UniProtKB" id="P03902"/>
    </source>
</evidence>
<evidence type="ECO:0000255" key="3"/>
<evidence type="ECO:0000305" key="4"/>
<feature type="chain" id="PRO_0000275083" description="NADH-ubiquinone oxidoreductase chain 4L">
    <location>
        <begin position="1"/>
        <end position="98"/>
    </location>
</feature>
<feature type="transmembrane region" description="Helical" evidence="3">
    <location>
        <begin position="1"/>
        <end position="21"/>
    </location>
</feature>
<feature type="transmembrane region" description="Helical" evidence="3">
    <location>
        <begin position="29"/>
        <end position="49"/>
    </location>
</feature>
<feature type="transmembrane region" description="Helical" evidence="3">
    <location>
        <begin position="61"/>
        <end position="81"/>
    </location>
</feature>
<geneLocation type="mitochondrion"/>
<reference key="1">
    <citation type="journal article" date="2004" name="Mol. Phylogenet. Evol.">
        <title>A phylogeny of the extant Phocidae inferred from complete mitochondrial DNA coding regions.</title>
        <authorList>
            <person name="Davis C.S."/>
            <person name="Delisle I."/>
            <person name="Stirling I."/>
            <person name="Siniff D.B."/>
            <person name="Strobeck C."/>
        </authorList>
    </citation>
    <scope>NUCLEOTIDE SEQUENCE [GENOMIC DNA]</scope>
</reference>
<name>NU4LM_OTABY</name>
<dbReference type="EC" id="7.1.1.2"/>
<dbReference type="EMBL" id="AY377241">
    <property type="protein sequence ID" value="AAQ93780.1"/>
    <property type="molecule type" value="Genomic_DNA"/>
</dbReference>
<dbReference type="SMR" id="Q679A3"/>
<dbReference type="GO" id="GO:0005743">
    <property type="term" value="C:mitochondrial inner membrane"/>
    <property type="evidence" value="ECO:0000250"/>
    <property type="project" value="UniProtKB"/>
</dbReference>
<dbReference type="GO" id="GO:0045271">
    <property type="term" value="C:respiratory chain complex I"/>
    <property type="evidence" value="ECO:0000250"/>
    <property type="project" value="UniProtKB"/>
</dbReference>
<dbReference type="GO" id="GO:0008137">
    <property type="term" value="F:NADH dehydrogenase (ubiquinone) activity"/>
    <property type="evidence" value="ECO:0000250"/>
    <property type="project" value="UniProtKB"/>
</dbReference>
<dbReference type="GO" id="GO:0042773">
    <property type="term" value="P:ATP synthesis coupled electron transport"/>
    <property type="evidence" value="ECO:0007669"/>
    <property type="project" value="InterPro"/>
</dbReference>
<dbReference type="FunFam" id="1.10.287.3510:FF:000002">
    <property type="entry name" value="NADH-ubiquinone oxidoreductase chain 4L"/>
    <property type="match status" value="1"/>
</dbReference>
<dbReference type="Gene3D" id="1.10.287.3510">
    <property type="match status" value="1"/>
</dbReference>
<dbReference type="InterPro" id="IPR001133">
    <property type="entry name" value="NADH_UbQ_OxRdtase_chain4L/K"/>
</dbReference>
<dbReference type="InterPro" id="IPR039428">
    <property type="entry name" value="NUOK/Mnh_C1-like"/>
</dbReference>
<dbReference type="PANTHER" id="PTHR11434:SF0">
    <property type="entry name" value="NADH-UBIQUINONE OXIDOREDUCTASE CHAIN 4L"/>
    <property type="match status" value="1"/>
</dbReference>
<dbReference type="PANTHER" id="PTHR11434">
    <property type="entry name" value="NADH-UBIQUINONE OXIDOREDUCTASE SUBUNIT ND4L"/>
    <property type="match status" value="1"/>
</dbReference>
<dbReference type="Pfam" id="PF00420">
    <property type="entry name" value="Oxidored_q2"/>
    <property type="match status" value="1"/>
</dbReference>